<sequence length="449" mass="50772">MEHKRGHVLAVPYPTQGHITPFRQFCKRLHFKGLKTTLALTTFVFNSINPDLSGPISIATISDGYDHGGFETADSIDDYLKDFKTSGSKTIADIIQKHQTSDNPITCIVYDAFLPWALDVAREFGLVATPFFTQPCAVNYVYYLSYINNGSLQLPIEELPFLELQDLPSFFSVSGSYPAYFEMVLQQFINFEKADFVLVNSFQELELHENELWSKACPVLTIGPTIPSIYLDQRIKSDTGYDLNLFESKDDSFCINWLDTRPQGSVVYVAFGSMAQLTNVQMEELASAVSNFSFLWVVRSSEEEKLPSGFLETVNKEKSLVLKWSPQLQVLSNKAIGCFLTHCGWNSTMEALTFGVPMVAMPQWTDQPMNAKYIQDVWKAGVRVKTEKESGIAKREEIEFSIKEVMEGERSKEMKKNVKKWRDLAVKSLNEGGSTDTNIDTFVSRVQSK</sequence>
<protein>
    <recommendedName>
        <fullName>UDP-glycosyltransferase 74F2</fullName>
        <ecNumber>2.4.1.-</ecNumber>
    </recommendedName>
    <alternativeName>
        <fullName>AtSGT1</fullName>
    </alternativeName>
    <alternativeName>
        <fullName>Salicylic acid glucosyltransferase 1</fullName>
    </alternativeName>
</protein>
<reference key="1">
    <citation type="journal article" date="2006" name="Mol. Cells">
        <title>Induction of a salicylic acid glucosyltransferase, AtSGT1, is an early disease response in Arabidopsis thaliana.</title>
        <authorList>
            <person name="Song J.T."/>
        </authorList>
    </citation>
    <scope>NUCLEOTIDE SEQUENCE [MRNA]</scope>
    <scope>FUNCTION</scope>
    <scope>BIOPHYSICOCHEMICAL PROPERTIES</scope>
    <scope>INDUCTION</scope>
</reference>
<reference key="2">
    <citation type="journal article" date="1999" name="Nature">
        <title>Sequence and analysis of chromosome 2 of the plant Arabidopsis thaliana.</title>
        <authorList>
            <person name="Lin X."/>
            <person name="Kaul S."/>
            <person name="Rounsley S.D."/>
            <person name="Shea T.P."/>
            <person name="Benito M.-I."/>
            <person name="Town C.D."/>
            <person name="Fujii C.Y."/>
            <person name="Mason T.M."/>
            <person name="Bowman C.L."/>
            <person name="Barnstead M.E."/>
            <person name="Feldblyum T.V."/>
            <person name="Buell C.R."/>
            <person name="Ketchum K.A."/>
            <person name="Lee J.J."/>
            <person name="Ronning C.M."/>
            <person name="Koo H.L."/>
            <person name="Moffat K.S."/>
            <person name="Cronin L.A."/>
            <person name="Shen M."/>
            <person name="Pai G."/>
            <person name="Van Aken S."/>
            <person name="Umayam L."/>
            <person name="Tallon L.J."/>
            <person name="Gill J.E."/>
            <person name="Adams M.D."/>
            <person name="Carrera A.J."/>
            <person name="Creasy T.H."/>
            <person name="Goodman H.M."/>
            <person name="Somerville C.R."/>
            <person name="Copenhaver G.P."/>
            <person name="Preuss D."/>
            <person name="Nierman W.C."/>
            <person name="White O."/>
            <person name="Eisen J.A."/>
            <person name="Salzberg S.L."/>
            <person name="Fraser C.M."/>
            <person name="Venter J.C."/>
        </authorList>
    </citation>
    <scope>NUCLEOTIDE SEQUENCE [LARGE SCALE GENOMIC DNA]</scope>
    <source>
        <strain>cv. Columbia</strain>
    </source>
</reference>
<reference key="3">
    <citation type="journal article" date="2017" name="Plant J.">
        <title>Araport11: a complete reannotation of the Arabidopsis thaliana reference genome.</title>
        <authorList>
            <person name="Cheng C.Y."/>
            <person name="Krishnakumar V."/>
            <person name="Chan A.P."/>
            <person name="Thibaud-Nissen F."/>
            <person name="Schobel S."/>
            <person name="Town C.D."/>
        </authorList>
    </citation>
    <scope>GENOME REANNOTATION</scope>
    <source>
        <strain>cv. Columbia</strain>
    </source>
</reference>
<reference key="4">
    <citation type="journal article" date="2003" name="Science">
        <title>Empirical analysis of transcriptional activity in the Arabidopsis genome.</title>
        <authorList>
            <person name="Yamada K."/>
            <person name="Lim J."/>
            <person name="Dale J.M."/>
            <person name="Chen H."/>
            <person name="Shinn P."/>
            <person name="Palm C.J."/>
            <person name="Southwick A.M."/>
            <person name="Wu H.C."/>
            <person name="Kim C.J."/>
            <person name="Nguyen M."/>
            <person name="Pham P.K."/>
            <person name="Cheuk R.F."/>
            <person name="Karlin-Newmann G."/>
            <person name="Liu S.X."/>
            <person name="Lam B."/>
            <person name="Sakano H."/>
            <person name="Wu T."/>
            <person name="Yu G."/>
            <person name="Miranda M."/>
            <person name="Quach H.L."/>
            <person name="Tripp M."/>
            <person name="Chang C.H."/>
            <person name="Lee J.M."/>
            <person name="Toriumi M.J."/>
            <person name="Chan M.M."/>
            <person name="Tang C.C."/>
            <person name="Onodera C.S."/>
            <person name="Deng J.M."/>
            <person name="Akiyama K."/>
            <person name="Ansari Y."/>
            <person name="Arakawa T."/>
            <person name="Banh J."/>
            <person name="Banno F."/>
            <person name="Bowser L."/>
            <person name="Brooks S.Y."/>
            <person name="Carninci P."/>
            <person name="Chao Q."/>
            <person name="Choy N."/>
            <person name="Enju A."/>
            <person name="Goldsmith A.D."/>
            <person name="Gurjal M."/>
            <person name="Hansen N.F."/>
            <person name="Hayashizaki Y."/>
            <person name="Johnson-Hopson C."/>
            <person name="Hsuan V.W."/>
            <person name="Iida K."/>
            <person name="Karnes M."/>
            <person name="Khan S."/>
            <person name="Koesema E."/>
            <person name="Ishida J."/>
            <person name="Jiang P.X."/>
            <person name="Jones T."/>
            <person name="Kawai J."/>
            <person name="Kamiya A."/>
            <person name="Meyers C."/>
            <person name="Nakajima M."/>
            <person name="Narusaka M."/>
            <person name="Seki M."/>
            <person name="Sakurai T."/>
            <person name="Satou M."/>
            <person name="Tamse R."/>
            <person name="Vaysberg M."/>
            <person name="Wallender E.K."/>
            <person name="Wong C."/>
            <person name="Yamamura Y."/>
            <person name="Yuan S."/>
            <person name="Shinozaki K."/>
            <person name="Davis R.W."/>
            <person name="Theologis A."/>
            <person name="Ecker J.R."/>
        </authorList>
    </citation>
    <scope>NUCLEOTIDE SEQUENCE [LARGE SCALE MRNA]</scope>
    <source>
        <strain>cv. Columbia</strain>
    </source>
</reference>
<reference key="5">
    <citation type="submission" date="2002-03" db="EMBL/GenBank/DDBJ databases">
        <title>Full-length cDNA from Arabidopsis thaliana.</title>
        <authorList>
            <person name="Brover V.V."/>
            <person name="Troukhan M.E."/>
            <person name="Alexandrov N.A."/>
            <person name="Lu Y.-P."/>
            <person name="Flavell R.B."/>
            <person name="Feldmann K.A."/>
        </authorList>
    </citation>
    <scope>NUCLEOTIDE SEQUENCE [LARGE SCALE MRNA]</scope>
</reference>
<reference key="6">
    <citation type="journal article" date="2001" name="J. Biol. Chem.">
        <title>Phylogenetic analysis of the UDP-glycosyltransferase multigene family of Arabidopsis thaliana.</title>
        <authorList>
            <person name="Li Y."/>
            <person name="Baldauf S."/>
            <person name="Lim E.K."/>
            <person name="Bowles D.J."/>
        </authorList>
    </citation>
    <scope>GENE FAMILY</scope>
</reference>
<reference key="7">
    <citation type="journal article" date="2002" name="J. Biol. Chem.">
        <title>The activity of Arabidopsis glycosyltransferases toward salicylic acid, 4-hydroxybenzoic acid, and other benzoates.</title>
        <authorList>
            <person name="Lim E.K."/>
            <person name="Doucet C.J."/>
            <person name="Li Y."/>
            <person name="Elias L."/>
            <person name="Worrall D."/>
            <person name="Spencer S.P."/>
            <person name="Ross J."/>
            <person name="Bowles D.J."/>
        </authorList>
    </citation>
    <scope>FUNCTION</scope>
</reference>
<reference key="8">
    <citation type="journal article" date="2003" name="J. Biol. Chem.">
        <title>Glucose conjugation of anthranilate by the Arabidopsis UGT74F2 glucosyltransferase is required for tryptophan mutant blue fluorescence.</title>
        <authorList>
            <person name="Quiel J.A."/>
            <person name="Bender J."/>
        </authorList>
    </citation>
    <scope>FUNCTION</scope>
    <scope>BIOPHYSICOCHEMICAL PROPERTIES</scope>
    <scope>TISSUE SPECIFICITY</scope>
    <scope>INDUCTION</scope>
</reference>
<reference key="9">
    <citation type="journal article" date="2008" name="J. Biol. Chem.">
        <title>Metabolism of the folate precursor p-aminobenzoate in plants: glucose ester formation and vacuolar storage.</title>
        <authorList>
            <person name="Eudes A."/>
            <person name="Bozzo G.G."/>
            <person name="Waller J.C."/>
            <person name="Naponelli V."/>
            <person name="Lim E.K."/>
            <person name="Bowles D.J."/>
            <person name="Gregory J.F. III"/>
            <person name="Hanson A.D."/>
        </authorList>
    </citation>
    <scope>FUNCTION</scope>
    <scope>BIOPHYSICOCHEMICAL PROPERTIES</scope>
    <source>
        <strain>cv. Landsberg erecta</strain>
    </source>
</reference>
<reference key="10">
    <citation type="journal article" date="2008" name="Phytochemistry">
        <title>Overexpression of AtSGT1, an Arabidopsis salicylic acid glucosyltransferase, leads to increased susceptibility to Pseudomonas syringae.</title>
        <authorList>
            <person name="Song J.T."/>
            <person name="Koo Y.J."/>
            <person name="Seo H.S."/>
            <person name="Kim M.C."/>
            <person name="Choi Y.D."/>
            <person name="Kim J.H."/>
        </authorList>
    </citation>
    <scope>FUNCTION</scope>
</reference>
<reference key="11">
    <citation type="journal article" date="2009" name="Mol. Cells">
        <title>The expression patterns of AtBSMT1 and AtSAGT1 encoding a salicylic acid (SA) methyltransferase and a SA glucosyltransferase, respectively, in Arabidopsis plants with altered defense responses.</title>
        <authorList>
            <person name="Song J.T."/>
            <person name="Koo Y.J."/>
            <person name="Park J.B."/>
            <person name="Seo Y.J."/>
            <person name="Cho Y.J."/>
            <person name="Seo H.S."/>
            <person name="Choi Y.D."/>
        </authorList>
    </citation>
    <scope>INDUCTION</scope>
</reference>
<gene>
    <name type="primary">UGT74F2</name>
    <name type="synonym">GT</name>
    <name type="synonym">SAGT1</name>
    <name type="synonym">SGT1</name>
    <name type="ordered locus">At2g43820</name>
    <name type="ORF">F18O19.7</name>
</gene>
<keyword id="KW-0002">3D-structure</keyword>
<keyword id="KW-0328">Glycosyltransferase</keyword>
<keyword id="KW-1185">Reference proteome</keyword>
<keyword id="KW-0808">Transferase</keyword>
<accession>O22822</accession>
<feature type="chain" id="PRO_0000409104" description="UDP-glycosyltransferase 74F2">
    <location>
        <begin position="1"/>
        <end position="449"/>
    </location>
</feature>
<feature type="binding site" evidence="1">
    <location>
        <position position="273"/>
    </location>
    <ligand>
        <name>UDP-alpha-D-glucose</name>
        <dbReference type="ChEBI" id="CHEBI:58885"/>
    </ligand>
</feature>
<feature type="binding site" evidence="1">
    <location>
        <begin position="325"/>
        <end position="327"/>
    </location>
    <ligand>
        <name>UDP-alpha-D-glucose</name>
        <dbReference type="ChEBI" id="CHEBI:58885"/>
    </ligand>
</feature>
<feature type="binding site" evidence="1">
    <location>
        <begin position="342"/>
        <end position="350"/>
    </location>
    <ligand>
        <name>UDP-alpha-D-glucose</name>
        <dbReference type="ChEBI" id="CHEBI:58885"/>
    </ligand>
</feature>
<feature type="binding site" evidence="1">
    <location>
        <begin position="364"/>
        <end position="367"/>
    </location>
    <ligand>
        <name>UDP-alpha-D-glucose</name>
        <dbReference type="ChEBI" id="CHEBI:58885"/>
    </ligand>
</feature>
<feature type="strand" evidence="11">
    <location>
        <begin position="7"/>
        <end position="11"/>
    </location>
</feature>
<feature type="helix" evidence="11">
    <location>
        <begin position="16"/>
        <end position="31"/>
    </location>
</feature>
<feature type="strand" evidence="11">
    <location>
        <begin position="35"/>
        <end position="41"/>
    </location>
</feature>
<feature type="helix" evidence="11">
    <location>
        <begin position="42"/>
        <end position="48"/>
    </location>
</feature>
<feature type="strand" evidence="11">
    <location>
        <begin position="54"/>
        <end position="61"/>
    </location>
</feature>
<feature type="turn" evidence="11">
    <location>
        <begin position="66"/>
        <end position="68"/>
    </location>
</feature>
<feature type="helix" evidence="11">
    <location>
        <begin position="69"/>
        <end position="72"/>
    </location>
</feature>
<feature type="helix" evidence="11">
    <location>
        <begin position="76"/>
        <end position="97"/>
    </location>
</feature>
<feature type="turn" evidence="11">
    <location>
        <begin position="98"/>
        <end position="100"/>
    </location>
</feature>
<feature type="strand" evidence="11">
    <location>
        <begin position="101"/>
        <end position="103"/>
    </location>
</feature>
<feature type="strand" evidence="11">
    <location>
        <begin position="107"/>
        <end position="111"/>
    </location>
</feature>
<feature type="helix" evidence="11">
    <location>
        <begin position="116"/>
        <end position="123"/>
    </location>
</feature>
<feature type="strand" evidence="11">
    <location>
        <begin position="127"/>
        <end position="132"/>
    </location>
</feature>
<feature type="helix" evidence="11">
    <location>
        <begin position="136"/>
        <end position="147"/>
    </location>
</feature>
<feature type="turn" evidence="11">
    <location>
        <begin position="148"/>
        <end position="150"/>
    </location>
</feature>
<feature type="strand" evidence="10">
    <location>
        <begin position="154"/>
        <end position="156"/>
    </location>
</feature>
<feature type="helix" evidence="11">
    <location>
        <begin position="164"/>
        <end position="166"/>
    </location>
</feature>
<feature type="helix" evidence="11">
    <location>
        <begin position="169"/>
        <end position="172"/>
    </location>
</feature>
<feature type="helix" evidence="11">
    <location>
        <begin position="178"/>
        <end position="185"/>
    </location>
</feature>
<feature type="helix" evidence="11">
    <location>
        <begin position="186"/>
        <end position="188"/>
    </location>
</feature>
<feature type="helix" evidence="11">
    <location>
        <begin position="191"/>
        <end position="193"/>
    </location>
</feature>
<feature type="strand" evidence="11">
    <location>
        <begin position="198"/>
        <end position="201"/>
    </location>
</feature>
<feature type="helix" evidence="11">
    <location>
        <begin position="203"/>
        <end position="205"/>
    </location>
</feature>
<feature type="helix" evidence="11">
    <location>
        <begin position="207"/>
        <end position="216"/>
    </location>
</feature>
<feature type="strand" evidence="10">
    <location>
        <begin position="219"/>
        <end position="221"/>
    </location>
</feature>
<feature type="helix" evidence="11">
    <location>
        <begin position="228"/>
        <end position="230"/>
    </location>
</feature>
<feature type="turn" evidence="9">
    <location>
        <begin position="249"/>
        <end position="251"/>
    </location>
</feature>
<feature type="helix" evidence="11">
    <location>
        <begin position="253"/>
        <end position="259"/>
    </location>
</feature>
<feature type="strand" evidence="11">
    <location>
        <begin position="266"/>
        <end position="270"/>
    </location>
</feature>
<feature type="turn" evidence="11">
    <location>
        <begin position="272"/>
        <end position="274"/>
    </location>
</feature>
<feature type="helix" evidence="11">
    <location>
        <begin position="279"/>
        <end position="289"/>
    </location>
</feature>
<feature type="strand" evidence="11">
    <location>
        <begin position="292"/>
        <end position="297"/>
    </location>
</feature>
<feature type="helix" evidence="11">
    <location>
        <begin position="300"/>
        <end position="305"/>
    </location>
</feature>
<feature type="helix" evidence="11">
    <location>
        <begin position="311"/>
        <end position="313"/>
    </location>
</feature>
<feature type="turn" evidence="11">
    <location>
        <begin position="316"/>
        <end position="318"/>
    </location>
</feature>
<feature type="strand" evidence="11">
    <location>
        <begin position="320"/>
        <end position="324"/>
    </location>
</feature>
<feature type="helix" evidence="11">
    <location>
        <begin position="327"/>
        <end position="332"/>
    </location>
</feature>
<feature type="strand" evidence="11">
    <location>
        <begin position="336"/>
        <end position="341"/>
    </location>
</feature>
<feature type="helix" evidence="11">
    <location>
        <begin position="345"/>
        <end position="354"/>
    </location>
</feature>
<feature type="strand" evidence="11">
    <location>
        <begin position="358"/>
        <end position="360"/>
    </location>
</feature>
<feature type="helix" evidence="11">
    <location>
        <begin position="367"/>
        <end position="376"/>
    </location>
</feature>
<feature type="strand" evidence="11">
    <location>
        <begin position="381"/>
        <end position="383"/>
    </location>
</feature>
<feature type="turn" evidence="11">
    <location>
        <begin position="388"/>
        <end position="390"/>
    </location>
</feature>
<feature type="helix" evidence="11">
    <location>
        <begin position="395"/>
        <end position="406"/>
    </location>
</feature>
<feature type="helix" evidence="11">
    <location>
        <begin position="409"/>
        <end position="418"/>
    </location>
</feature>
<feature type="helix" evidence="11">
    <location>
        <begin position="420"/>
        <end position="429"/>
    </location>
</feature>
<feature type="helix" evidence="11">
    <location>
        <begin position="434"/>
        <end position="446"/>
    </location>
</feature>
<proteinExistence type="evidence at protein level"/>
<dbReference type="EC" id="2.4.1.-"/>
<dbReference type="EMBL" id="DQ407524">
    <property type="protein sequence ID" value="ABD66577.1"/>
    <property type="molecule type" value="mRNA"/>
</dbReference>
<dbReference type="EMBL" id="AC002333">
    <property type="protein sequence ID" value="AAB64024.1"/>
    <property type="molecule type" value="Genomic_DNA"/>
</dbReference>
<dbReference type="EMBL" id="CP002685">
    <property type="protein sequence ID" value="AEC10331.1"/>
    <property type="molecule type" value="Genomic_DNA"/>
</dbReference>
<dbReference type="EMBL" id="AY062483">
    <property type="protein sequence ID" value="AAL32561.1"/>
    <property type="molecule type" value="mRNA"/>
</dbReference>
<dbReference type="EMBL" id="BT010327">
    <property type="protein sequence ID" value="AAQ55278.1"/>
    <property type="molecule type" value="mRNA"/>
</dbReference>
<dbReference type="EMBL" id="AY087340">
    <property type="protein sequence ID" value="AAM64890.1"/>
    <property type="molecule type" value="mRNA"/>
</dbReference>
<dbReference type="PIR" id="H84870">
    <property type="entry name" value="H84870"/>
</dbReference>
<dbReference type="RefSeq" id="NP_181910.1">
    <property type="nucleotide sequence ID" value="NM_129944.3"/>
</dbReference>
<dbReference type="PDB" id="5U6M">
    <property type="method" value="X-ray"/>
    <property type="resolution" value="2.57 A"/>
    <property type="chains" value="A/B=1-449"/>
</dbReference>
<dbReference type="PDB" id="5U6N">
    <property type="method" value="X-ray"/>
    <property type="resolution" value="2.00 A"/>
    <property type="chains" value="A/B=1-449"/>
</dbReference>
<dbReference type="PDB" id="5U6S">
    <property type="method" value="X-ray"/>
    <property type="resolution" value="2.00 A"/>
    <property type="chains" value="A/B=1-449"/>
</dbReference>
<dbReference type="PDB" id="5V2J">
    <property type="method" value="X-ray"/>
    <property type="resolution" value="1.80 A"/>
    <property type="chains" value="A/B=1-449"/>
</dbReference>
<dbReference type="PDB" id="5V2K">
    <property type="method" value="X-ray"/>
    <property type="resolution" value="2.00 A"/>
    <property type="chains" value="A/B=1-449"/>
</dbReference>
<dbReference type="PDBsum" id="5U6M"/>
<dbReference type="PDBsum" id="5U6N"/>
<dbReference type="PDBsum" id="5U6S"/>
<dbReference type="PDBsum" id="5V2J"/>
<dbReference type="PDBsum" id="5V2K"/>
<dbReference type="SMR" id="O22822"/>
<dbReference type="FunCoup" id="O22822">
    <property type="interactions" value="102"/>
</dbReference>
<dbReference type="STRING" id="3702.O22822"/>
<dbReference type="CAZy" id="GT1">
    <property type="family name" value="Glycosyltransferase Family 1"/>
</dbReference>
<dbReference type="GlyGen" id="O22822">
    <property type="glycosylation" value="4 sites"/>
</dbReference>
<dbReference type="PaxDb" id="3702-AT2G43820.1"/>
<dbReference type="ProteomicsDB" id="242809"/>
<dbReference type="EnsemblPlants" id="AT2G43820.1">
    <property type="protein sequence ID" value="AT2G43820.1"/>
    <property type="gene ID" value="AT2G43820"/>
</dbReference>
<dbReference type="GeneID" id="818986"/>
<dbReference type="Gramene" id="AT2G43820.1">
    <property type="protein sequence ID" value="AT2G43820.1"/>
    <property type="gene ID" value="AT2G43820"/>
</dbReference>
<dbReference type="KEGG" id="ath:AT2G43820"/>
<dbReference type="Araport" id="AT2G43820"/>
<dbReference type="TAIR" id="AT2G43820">
    <property type="gene designation" value="UGT74F2"/>
</dbReference>
<dbReference type="eggNOG" id="KOG1192">
    <property type="taxonomic scope" value="Eukaryota"/>
</dbReference>
<dbReference type="HOGENOM" id="CLU_001724_0_1_1"/>
<dbReference type="InParanoid" id="O22822"/>
<dbReference type="OMA" id="QQFINFE"/>
<dbReference type="PhylomeDB" id="O22822"/>
<dbReference type="BioCyc" id="ARA:AT2G43820-MONOMER"/>
<dbReference type="BioCyc" id="MetaCyc:AT2G43820-MONOMER"/>
<dbReference type="PRO" id="PR:O22822"/>
<dbReference type="Proteomes" id="UP000006548">
    <property type="component" value="Chromosome 2"/>
</dbReference>
<dbReference type="ExpressionAtlas" id="O22822">
    <property type="expression patterns" value="baseline and differential"/>
</dbReference>
<dbReference type="GO" id="GO:0005829">
    <property type="term" value="C:cytosol"/>
    <property type="evidence" value="ECO:0000314"/>
    <property type="project" value="TAIR"/>
</dbReference>
<dbReference type="GO" id="GO:0052641">
    <property type="term" value="F:benzoic acid glucosyltransferase activity"/>
    <property type="evidence" value="ECO:0000314"/>
    <property type="project" value="TAIR"/>
</dbReference>
<dbReference type="GO" id="GO:0090704">
    <property type="term" value="F:nicotinate-O-glucosyltransferase activity"/>
    <property type="evidence" value="ECO:0000314"/>
    <property type="project" value="TAIR"/>
</dbReference>
<dbReference type="GO" id="GO:0052639">
    <property type="term" value="F:salicylic acid glucosyltransferase (ester-forming) activity"/>
    <property type="evidence" value="ECO:0000314"/>
    <property type="project" value="TAIR"/>
</dbReference>
<dbReference type="GO" id="GO:0052640">
    <property type="term" value="F:salicylic acid glucosyltransferase (glucoside-forming) activity"/>
    <property type="evidence" value="ECO:0000314"/>
    <property type="project" value="TAIR"/>
</dbReference>
<dbReference type="GO" id="GO:0080002">
    <property type="term" value="F:UDP-glucose:4-aminobenzoate acylglucosyltransferase activity"/>
    <property type="evidence" value="ECO:0000314"/>
    <property type="project" value="TAIR"/>
</dbReference>
<dbReference type="GO" id="GO:0035251">
    <property type="term" value="F:UDP-glucosyltransferase activity"/>
    <property type="evidence" value="ECO:0000314"/>
    <property type="project" value="TAIR"/>
</dbReference>
<dbReference type="GO" id="GO:0018874">
    <property type="term" value="P:benzoate metabolic process"/>
    <property type="evidence" value="ECO:0000314"/>
    <property type="project" value="TAIR"/>
</dbReference>
<dbReference type="GO" id="GO:0046482">
    <property type="term" value="P:para-aminobenzoic acid metabolic process"/>
    <property type="evidence" value="ECO:0000314"/>
    <property type="project" value="TAIR"/>
</dbReference>
<dbReference type="GO" id="GO:0010030">
    <property type="term" value="P:positive regulation of seed germination"/>
    <property type="evidence" value="ECO:0000315"/>
    <property type="project" value="TAIR"/>
</dbReference>
<dbReference type="GO" id="GO:0009696">
    <property type="term" value="P:salicylic acid metabolic process"/>
    <property type="evidence" value="ECO:0000315"/>
    <property type="project" value="TAIR"/>
</dbReference>
<dbReference type="CDD" id="cd03784">
    <property type="entry name" value="GT1_Gtf-like"/>
    <property type="match status" value="1"/>
</dbReference>
<dbReference type="FunFam" id="3.40.50.2000:FF:000019">
    <property type="entry name" value="Glycosyltransferase"/>
    <property type="match status" value="1"/>
</dbReference>
<dbReference type="FunFam" id="3.40.50.2000:FF:000057">
    <property type="entry name" value="Glycosyltransferase"/>
    <property type="match status" value="1"/>
</dbReference>
<dbReference type="Gene3D" id="3.40.50.2000">
    <property type="entry name" value="Glycogen Phosphorylase B"/>
    <property type="match status" value="2"/>
</dbReference>
<dbReference type="InterPro" id="IPR002213">
    <property type="entry name" value="UDP_glucos_trans"/>
</dbReference>
<dbReference type="InterPro" id="IPR035595">
    <property type="entry name" value="UDP_glycos_trans_CS"/>
</dbReference>
<dbReference type="PANTHER" id="PTHR11926">
    <property type="entry name" value="GLUCOSYL/GLUCURONOSYL TRANSFERASES"/>
    <property type="match status" value="1"/>
</dbReference>
<dbReference type="PANTHER" id="PTHR11926:SF1311">
    <property type="entry name" value="UDP-GLYCOSYLTRANSFERASE 74F2"/>
    <property type="match status" value="1"/>
</dbReference>
<dbReference type="Pfam" id="PF00201">
    <property type="entry name" value="UDPGT"/>
    <property type="match status" value="1"/>
</dbReference>
<dbReference type="SUPFAM" id="SSF53756">
    <property type="entry name" value="UDP-Glycosyltransferase/glycogen phosphorylase"/>
    <property type="match status" value="1"/>
</dbReference>
<dbReference type="PROSITE" id="PS00375">
    <property type="entry name" value="UDPGT"/>
    <property type="match status" value="1"/>
</dbReference>
<comment type="function">
    <text evidence="2 3 4 5 6">Glycosyltransferase that glucosylates benzoic acid and derivatives. Substrate preference is benzoic acid &gt; salicylic acid (SA) &gt; 3-hydroxybenzoic acid &gt; 4-hydroxybenzoic acid. Catalyzes the formation of both SA 2-O-beta-D-glucoside (SAG) and SA glucose ester (SGE). Has high affinity for the tryptophan precursor anthranilate. Catalyzes the formation of anthranilate glucose ester. Is the major source of this activity in the plant.</text>
</comment>
<comment type="biophysicochemical properties">
    <kinetics>
        <KM evidence="3 4 6">80 uM for anthranilate</KM>
        <KM evidence="3 4 6">190 uM for salicylate</KM>
        <KM evidence="3 4 6">540 uM for benzoate</KM>
        <KM evidence="3 4 6">920 uM for 4-aminobenzoate</KM>
    </kinetics>
</comment>
<comment type="tissue specificity">
    <text evidence="3">Expressed in seedlings.</text>
</comment>
<comment type="induction">
    <text evidence="3 4 7">By auxin, abscisic acid, salicylic acid and the bacterial pathogen P.syringae.</text>
</comment>
<comment type="miscellaneous">
    <text>Plants overexpressing UGT74F2 show increased susceptibility to the bacterial pathogen P.syringae and reduced accumulation of free SA upon infection.</text>
</comment>
<comment type="similarity">
    <text evidence="8">Belongs to the UDP-glycosyltransferase family.</text>
</comment>
<organism>
    <name type="scientific">Arabidopsis thaliana</name>
    <name type="common">Mouse-ear cress</name>
    <dbReference type="NCBI Taxonomy" id="3702"/>
    <lineage>
        <taxon>Eukaryota</taxon>
        <taxon>Viridiplantae</taxon>
        <taxon>Streptophyta</taxon>
        <taxon>Embryophyta</taxon>
        <taxon>Tracheophyta</taxon>
        <taxon>Spermatophyta</taxon>
        <taxon>Magnoliopsida</taxon>
        <taxon>eudicotyledons</taxon>
        <taxon>Gunneridae</taxon>
        <taxon>Pentapetalae</taxon>
        <taxon>rosids</taxon>
        <taxon>malvids</taxon>
        <taxon>Brassicales</taxon>
        <taxon>Brassicaceae</taxon>
        <taxon>Camelineae</taxon>
        <taxon>Arabidopsis</taxon>
    </lineage>
</organism>
<name>U74F2_ARATH</name>
<evidence type="ECO:0000250" key="1"/>
<evidence type="ECO:0000269" key="2">
    <source>
    </source>
</evidence>
<evidence type="ECO:0000269" key="3">
    <source>
    </source>
</evidence>
<evidence type="ECO:0000269" key="4">
    <source>
    </source>
</evidence>
<evidence type="ECO:0000269" key="5">
    <source>
    </source>
</evidence>
<evidence type="ECO:0000269" key="6">
    <source>
    </source>
</evidence>
<evidence type="ECO:0000269" key="7">
    <source>
    </source>
</evidence>
<evidence type="ECO:0000305" key="8"/>
<evidence type="ECO:0007829" key="9">
    <source>
        <dbReference type="PDB" id="5U6M"/>
    </source>
</evidence>
<evidence type="ECO:0007829" key="10">
    <source>
        <dbReference type="PDB" id="5U6S"/>
    </source>
</evidence>
<evidence type="ECO:0007829" key="11">
    <source>
        <dbReference type="PDB" id="5V2J"/>
    </source>
</evidence>